<sequence>MAQVNKQAIAAAFGRAASQYEQHASLQQHSADALLTLLTGRQFASVLDAGCGPGRMSRYWRERGSEVTALDLSLPMLQQARDRQAAHHYLLADIEAIPHDAEVFDLAWSNLAVQWCGDLRDALSELYRVVRPGGVVAFTTLCQGSLPELRQAWQAVDNRAHANSFLPEEAIDHALRGWRAFRHTQAMTLWFEDALSAMRSLKGIGATHLHEGRESDVLTRARLRQIQLAWPQRQGKYPLTYHLFMGVIERD</sequence>
<dbReference type="EC" id="2.1.1.197" evidence="1"/>
<dbReference type="EMBL" id="AE006468">
    <property type="protein sequence ID" value="AAL19733.1"/>
    <property type="molecule type" value="Genomic_DNA"/>
</dbReference>
<dbReference type="RefSeq" id="NP_459774.1">
    <property type="nucleotide sequence ID" value="NC_003197.2"/>
</dbReference>
<dbReference type="RefSeq" id="WP_000079909.1">
    <property type="nucleotide sequence ID" value="NC_003197.2"/>
</dbReference>
<dbReference type="SMR" id="Q8ZQQ6"/>
<dbReference type="STRING" id="99287.STM0796"/>
<dbReference type="PaxDb" id="99287-STM0796"/>
<dbReference type="DNASU" id="1252316"/>
<dbReference type="GeneID" id="1252316"/>
<dbReference type="KEGG" id="stm:STM0796"/>
<dbReference type="PATRIC" id="fig|99287.12.peg.830"/>
<dbReference type="HOGENOM" id="CLU_046586_2_2_6"/>
<dbReference type="OMA" id="SWQAVDG"/>
<dbReference type="PhylomeDB" id="Q8ZQQ6"/>
<dbReference type="BioCyc" id="SENT99287:STM0796-MONOMER"/>
<dbReference type="UniPathway" id="UPA00078"/>
<dbReference type="Proteomes" id="UP000001014">
    <property type="component" value="Chromosome"/>
</dbReference>
<dbReference type="GO" id="GO:0010340">
    <property type="term" value="F:carboxyl-O-methyltransferase activity"/>
    <property type="evidence" value="ECO:0007669"/>
    <property type="project" value="UniProtKB-UniRule"/>
</dbReference>
<dbReference type="GO" id="GO:0102130">
    <property type="term" value="F:malonyl-CoA methyltransferase activity"/>
    <property type="evidence" value="ECO:0007669"/>
    <property type="project" value="UniProtKB-EC"/>
</dbReference>
<dbReference type="GO" id="GO:0008168">
    <property type="term" value="F:methyltransferase activity"/>
    <property type="evidence" value="ECO:0000318"/>
    <property type="project" value="GO_Central"/>
</dbReference>
<dbReference type="GO" id="GO:0008757">
    <property type="term" value="F:S-adenosylmethionine-dependent methyltransferase activity"/>
    <property type="evidence" value="ECO:0007669"/>
    <property type="project" value="InterPro"/>
</dbReference>
<dbReference type="GO" id="GO:0009102">
    <property type="term" value="P:biotin biosynthetic process"/>
    <property type="evidence" value="ECO:0007669"/>
    <property type="project" value="UniProtKB-UniRule"/>
</dbReference>
<dbReference type="GO" id="GO:0032259">
    <property type="term" value="P:methylation"/>
    <property type="evidence" value="ECO:0007669"/>
    <property type="project" value="UniProtKB-KW"/>
</dbReference>
<dbReference type="CDD" id="cd02440">
    <property type="entry name" value="AdoMet_MTases"/>
    <property type="match status" value="1"/>
</dbReference>
<dbReference type="Gene3D" id="3.40.50.150">
    <property type="entry name" value="Vaccinia Virus protein VP39"/>
    <property type="match status" value="1"/>
</dbReference>
<dbReference type="HAMAP" id="MF_00835">
    <property type="entry name" value="BioC"/>
    <property type="match status" value="1"/>
</dbReference>
<dbReference type="InterPro" id="IPR011814">
    <property type="entry name" value="BioC"/>
</dbReference>
<dbReference type="InterPro" id="IPR013216">
    <property type="entry name" value="Methyltransf_11"/>
</dbReference>
<dbReference type="InterPro" id="IPR029063">
    <property type="entry name" value="SAM-dependent_MTases_sf"/>
</dbReference>
<dbReference type="NCBIfam" id="TIGR02072">
    <property type="entry name" value="BioC"/>
    <property type="match status" value="1"/>
</dbReference>
<dbReference type="NCBIfam" id="NF007610">
    <property type="entry name" value="PRK10258.1"/>
    <property type="match status" value="1"/>
</dbReference>
<dbReference type="PANTHER" id="PTHR43591">
    <property type="entry name" value="METHYLTRANSFERASE"/>
    <property type="match status" value="1"/>
</dbReference>
<dbReference type="Pfam" id="PF08241">
    <property type="entry name" value="Methyltransf_11"/>
    <property type="match status" value="1"/>
</dbReference>
<dbReference type="SUPFAM" id="SSF53335">
    <property type="entry name" value="S-adenosyl-L-methionine-dependent methyltransferases"/>
    <property type="match status" value="1"/>
</dbReference>
<protein>
    <recommendedName>
        <fullName evidence="1">Malonyl-[acyl-carrier protein] O-methyltransferase</fullName>
        <shortName evidence="1">Malonyl-ACP O-methyltransferase</shortName>
        <ecNumber evidence="1">2.1.1.197</ecNumber>
    </recommendedName>
    <alternativeName>
        <fullName evidence="1">Biotin synthesis protein BioC</fullName>
    </alternativeName>
</protein>
<gene>
    <name evidence="1" type="primary">bioC</name>
    <name type="ordered locus">STM0796</name>
</gene>
<evidence type="ECO:0000255" key="1">
    <source>
        <dbReference type="HAMAP-Rule" id="MF_00835"/>
    </source>
</evidence>
<reference key="1">
    <citation type="journal article" date="2001" name="Nature">
        <title>Complete genome sequence of Salmonella enterica serovar Typhimurium LT2.</title>
        <authorList>
            <person name="McClelland M."/>
            <person name="Sanderson K.E."/>
            <person name="Spieth J."/>
            <person name="Clifton S.W."/>
            <person name="Latreille P."/>
            <person name="Courtney L."/>
            <person name="Porwollik S."/>
            <person name="Ali J."/>
            <person name="Dante M."/>
            <person name="Du F."/>
            <person name="Hou S."/>
            <person name="Layman D."/>
            <person name="Leonard S."/>
            <person name="Nguyen C."/>
            <person name="Scott K."/>
            <person name="Holmes A."/>
            <person name="Grewal N."/>
            <person name="Mulvaney E."/>
            <person name="Ryan E."/>
            <person name="Sun H."/>
            <person name="Florea L."/>
            <person name="Miller W."/>
            <person name="Stoneking T."/>
            <person name="Nhan M."/>
            <person name="Waterston R."/>
            <person name="Wilson R.K."/>
        </authorList>
    </citation>
    <scope>NUCLEOTIDE SEQUENCE [LARGE SCALE GENOMIC DNA]</scope>
    <source>
        <strain>LT2 / SGSC1412 / ATCC 700720</strain>
    </source>
</reference>
<organism>
    <name type="scientific">Salmonella typhimurium (strain LT2 / SGSC1412 / ATCC 700720)</name>
    <dbReference type="NCBI Taxonomy" id="99287"/>
    <lineage>
        <taxon>Bacteria</taxon>
        <taxon>Pseudomonadati</taxon>
        <taxon>Pseudomonadota</taxon>
        <taxon>Gammaproteobacteria</taxon>
        <taxon>Enterobacterales</taxon>
        <taxon>Enterobacteriaceae</taxon>
        <taxon>Salmonella</taxon>
    </lineage>
</organism>
<proteinExistence type="inferred from homology"/>
<accession>Q8ZQQ6</accession>
<feature type="chain" id="PRO_0000412522" description="Malonyl-[acyl-carrier protein] O-methyltransferase">
    <location>
        <begin position="1"/>
        <end position="251"/>
    </location>
</feature>
<name>BIOC_SALTY</name>
<comment type="function">
    <text evidence="1">Converts the free carboxyl group of a malonyl-thioester to its methyl ester by transfer of a methyl group from S-adenosyl-L-methionine (SAM). It allows to synthesize pimeloyl-ACP via the fatty acid synthetic pathway.</text>
</comment>
<comment type="catalytic activity">
    <reaction evidence="1">
        <text>malonyl-[ACP] + S-adenosyl-L-methionine = malonyl-[ACP] methyl ester + S-adenosyl-L-homocysteine</text>
        <dbReference type="Rhea" id="RHEA:17105"/>
        <dbReference type="Rhea" id="RHEA-COMP:9623"/>
        <dbReference type="Rhea" id="RHEA-COMP:9954"/>
        <dbReference type="ChEBI" id="CHEBI:57856"/>
        <dbReference type="ChEBI" id="CHEBI:59789"/>
        <dbReference type="ChEBI" id="CHEBI:78449"/>
        <dbReference type="ChEBI" id="CHEBI:78845"/>
        <dbReference type="EC" id="2.1.1.197"/>
    </reaction>
</comment>
<comment type="pathway">
    <text evidence="1">Cofactor biosynthesis; biotin biosynthesis.</text>
</comment>
<comment type="similarity">
    <text evidence="1">Belongs to the methyltransferase superfamily.</text>
</comment>
<keyword id="KW-0093">Biotin biosynthesis</keyword>
<keyword id="KW-0489">Methyltransferase</keyword>
<keyword id="KW-1185">Reference proteome</keyword>
<keyword id="KW-0949">S-adenosyl-L-methionine</keyword>
<keyword id="KW-0808">Transferase</keyword>